<proteinExistence type="inferred from homology"/>
<comment type="function">
    <text evidence="1">Can catalyze the hydrolysis of ATP in the presence of single-stranded DNA, the ATP-dependent uptake of single-stranded DNA by duplex DNA, and the ATP-dependent hybridization of homologous single-stranded DNAs. It interacts with LexA causing its activation and leading to its autocatalytic cleavage.</text>
</comment>
<comment type="subcellular location">
    <subcellularLocation>
        <location evidence="1">Cytoplasm</location>
    </subcellularLocation>
</comment>
<comment type="similarity">
    <text evidence="1">Belongs to the RecA family.</text>
</comment>
<evidence type="ECO:0000255" key="1">
    <source>
        <dbReference type="HAMAP-Rule" id="MF_00268"/>
    </source>
</evidence>
<evidence type="ECO:0000256" key="2">
    <source>
        <dbReference type="SAM" id="MobiDB-lite"/>
    </source>
</evidence>
<protein>
    <recommendedName>
        <fullName evidence="1">Protein RecA</fullName>
    </recommendedName>
    <alternativeName>
        <fullName evidence="1">Recombinase A</fullName>
    </alternativeName>
</protein>
<name>RECA_XANE5</name>
<organism>
    <name type="scientific">Xanthomonas euvesicatoria pv. vesicatoria (strain 85-10)</name>
    <name type="common">Xanthomonas campestris pv. vesicatoria</name>
    <dbReference type="NCBI Taxonomy" id="316273"/>
    <lineage>
        <taxon>Bacteria</taxon>
        <taxon>Pseudomonadati</taxon>
        <taxon>Pseudomonadota</taxon>
        <taxon>Gammaproteobacteria</taxon>
        <taxon>Lysobacterales</taxon>
        <taxon>Lysobacteraceae</taxon>
        <taxon>Xanthomonas</taxon>
    </lineage>
</organism>
<sequence>MDENKKRALSAALSQIEKQFGKGSVMRMGDRVIEAVEVIPTGSLMLDIALGIGGLPKGRVVEIYGPESSGKTTLTLQAIAQCQKNGGTAAFIDAEHALDPIYAAKLGVNVDDLLLSQPDTGEQALEIADMLVRSGSVDIVVVDSVAALTPKAEIEGEMGDQLPGLQARLMSQALRKLTGNIKRSNTLVVFINQLRMKIGVMMPGQSPEVTTGGNALKFYASVRLDIRRIGAIKKGDEIIGNQTKIKVVKNKLAPPFKQVVTEILYGEGISREGELIDMGVEAKLVDKAGAWYSYGDERIGQGKDNARTYLRDNPQVATRLEAELREKFQPAEAPREAGDDEDKE</sequence>
<gene>
    <name evidence="1" type="primary">recA</name>
    <name type="ordered locus">XCV1773</name>
</gene>
<reference key="1">
    <citation type="journal article" date="2005" name="J. Bacteriol.">
        <title>Insights into genome plasticity and pathogenicity of the plant pathogenic Bacterium Xanthomonas campestris pv. vesicatoria revealed by the complete genome sequence.</title>
        <authorList>
            <person name="Thieme F."/>
            <person name="Koebnik R."/>
            <person name="Bekel T."/>
            <person name="Berger C."/>
            <person name="Boch J."/>
            <person name="Buettner D."/>
            <person name="Caldana C."/>
            <person name="Gaigalat L."/>
            <person name="Goesmann A."/>
            <person name="Kay S."/>
            <person name="Kirchner O."/>
            <person name="Lanz C."/>
            <person name="Linke B."/>
            <person name="McHardy A.C."/>
            <person name="Meyer F."/>
            <person name="Mittenhuber G."/>
            <person name="Nies D.H."/>
            <person name="Niesbach-Kloesgen U."/>
            <person name="Patschkowski T."/>
            <person name="Rueckert C."/>
            <person name="Rupp O."/>
            <person name="Schneiker S."/>
            <person name="Schuster S.C."/>
            <person name="Vorhoelter F.J."/>
            <person name="Weber E."/>
            <person name="Puehler A."/>
            <person name="Bonas U."/>
            <person name="Bartels D."/>
            <person name="Kaiser O."/>
        </authorList>
    </citation>
    <scope>NUCLEOTIDE SEQUENCE [LARGE SCALE GENOMIC DNA]</scope>
    <source>
        <strain>85-10</strain>
    </source>
</reference>
<dbReference type="EMBL" id="AM039952">
    <property type="protein sequence ID" value="CAJ23450.1"/>
    <property type="molecule type" value="Genomic_DNA"/>
</dbReference>
<dbReference type="RefSeq" id="WP_008574635.1">
    <property type="nucleotide sequence ID" value="NZ_CP017190.1"/>
</dbReference>
<dbReference type="SMR" id="Q3BUQ9"/>
<dbReference type="STRING" id="456327.BJD11_13680"/>
<dbReference type="GeneID" id="97510115"/>
<dbReference type="KEGG" id="xcv:XCV1773"/>
<dbReference type="eggNOG" id="COG0468">
    <property type="taxonomic scope" value="Bacteria"/>
</dbReference>
<dbReference type="HOGENOM" id="CLU_040469_1_2_6"/>
<dbReference type="Proteomes" id="UP000007069">
    <property type="component" value="Chromosome"/>
</dbReference>
<dbReference type="GO" id="GO:0005829">
    <property type="term" value="C:cytosol"/>
    <property type="evidence" value="ECO:0007669"/>
    <property type="project" value="TreeGrafter"/>
</dbReference>
<dbReference type="GO" id="GO:0005524">
    <property type="term" value="F:ATP binding"/>
    <property type="evidence" value="ECO:0007669"/>
    <property type="project" value="UniProtKB-UniRule"/>
</dbReference>
<dbReference type="GO" id="GO:0016887">
    <property type="term" value="F:ATP hydrolysis activity"/>
    <property type="evidence" value="ECO:0007669"/>
    <property type="project" value="InterPro"/>
</dbReference>
<dbReference type="GO" id="GO:0140664">
    <property type="term" value="F:ATP-dependent DNA damage sensor activity"/>
    <property type="evidence" value="ECO:0007669"/>
    <property type="project" value="InterPro"/>
</dbReference>
<dbReference type="GO" id="GO:0003684">
    <property type="term" value="F:damaged DNA binding"/>
    <property type="evidence" value="ECO:0007669"/>
    <property type="project" value="UniProtKB-UniRule"/>
</dbReference>
<dbReference type="GO" id="GO:0003697">
    <property type="term" value="F:single-stranded DNA binding"/>
    <property type="evidence" value="ECO:0007669"/>
    <property type="project" value="UniProtKB-UniRule"/>
</dbReference>
<dbReference type="GO" id="GO:0006310">
    <property type="term" value="P:DNA recombination"/>
    <property type="evidence" value="ECO:0007669"/>
    <property type="project" value="UniProtKB-UniRule"/>
</dbReference>
<dbReference type="GO" id="GO:0006281">
    <property type="term" value="P:DNA repair"/>
    <property type="evidence" value="ECO:0007669"/>
    <property type="project" value="UniProtKB-UniRule"/>
</dbReference>
<dbReference type="GO" id="GO:0009432">
    <property type="term" value="P:SOS response"/>
    <property type="evidence" value="ECO:0007669"/>
    <property type="project" value="UniProtKB-UniRule"/>
</dbReference>
<dbReference type="CDD" id="cd00983">
    <property type="entry name" value="RecA"/>
    <property type="match status" value="1"/>
</dbReference>
<dbReference type="FunFam" id="3.40.50.300:FF:000087">
    <property type="entry name" value="Recombinase RecA"/>
    <property type="match status" value="1"/>
</dbReference>
<dbReference type="Gene3D" id="3.40.50.300">
    <property type="entry name" value="P-loop containing nucleotide triphosphate hydrolases"/>
    <property type="match status" value="1"/>
</dbReference>
<dbReference type="HAMAP" id="MF_00268">
    <property type="entry name" value="RecA"/>
    <property type="match status" value="1"/>
</dbReference>
<dbReference type="InterPro" id="IPR003593">
    <property type="entry name" value="AAA+_ATPase"/>
</dbReference>
<dbReference type="InterPro" id="IPR013765">
    <property type="entry name" value="DNA_recomb/repair_RecA"/>
</dbReference>
<dbReference type="InterPro" id="IPR020584">
    <property type="entry name" value="DNA_recomb/repair_RecA_CS"/>
</dbReference>
<dbReference type="InterPro" id="IPR027417">
    <property type="entry name" value="P-loop_NTPase"/>
</dbReference>
<dbReference type="InterPro" id="IPR049261">
    <property type="entry name" value="RecA-like_C"/>
</dbReference>
<dbReference type="InterPro" id="IPR049428">
    <property type="entry name" value="RecA-like_N"/>
</dbReference>
<dbReference type="InterPro" id="IPR020588">
    <property type="entry name" value="RecA_ATP-bd"/>
</dbReference>
<dbReference type="InterPro" id="IPR023400">
    <property type="entry name" value="RecA_C_sf"/>
</dbReference>
<dbReference type="InterPro" id="IPR020587">
    <property type="entry name" value="RecA_monomer-monomer_interface"/>
</dbReference>
<dbReference type="NCBIfam" id="TIGR02012">
    <property type="entry name" value="tigrfam_recA"/>
    <property type="match status" value="1"/>
</dbReference>
<dbReference type="PANTHER" id="PTHR45900:SF1">
    <property type="entry name" value="MITOCHONDRIAL DNA REPAIR PROTEIN RECA HOMOLOG-RELATED"/>
    <property type="match status" value="1"/>
</dbReference>
<dbReference type="PANTHER" id="PTHR45900">
    <property type="entry name" value="RECA"/>
    <property type="match status" value="1"/>
</dbReference>
<dbReference type="Pfam" id="PF00154">
    <property type="entry name" value="RecA"/>
    <property type="match status" value="1"/>
</dbReference>
<dbReference type="Pfam" id="PF21096">
    <property type="entry name" value="RecA_C"/>
    <property type="match status" value="1"/>
</dbReference>
<dbReference type="PRINTS" id="PR00142">
    <property type="entry name" value="RECA"/>
</dbReference>
<dbReference type="SMART" id="SM00382">
    <property type="entry name" value="AAA"/>
    <property type="match status" value="1"/>
</dbReference>
<dbReference type="SUPFAM" id="SSF52540">
    <property type="entry name" value="P-loop containing nucleoside triphosphate hydrolases"/>
    <property type="match status" value="1"/>
</dbReference>
<dbReference type="SUPFAM" id="SSF54752">
    <property type="entry name" value="RecA protein, C-terminal domain"/>
    <property type="match status" value="1"/>
</dbReference>
<dbReference type="PROSITE" id="PS00321">
    <property type="entry name" value="RECA_1"/>
    <property type="match status" value="1"/>
</dbReference>
<dbReference type="PROSITE" id="PS50162">
    <property type="entry name" value="RECA_2"/>
    <property type="match status" value="1"/>
</dbReference>
<dbReference type="PROSITE" id="PS50163">
    <property type="entry name" value="RECA_3"/>
    <property type="match status" value="1"/>
</dbReference>
<accession>Q3BUQ9</accession>
<feature type="chain" id="PRO_1000048032" description="Protein RecA">
    <location>
        <begin position="1"/>
        <end position="344"/>
    </location>
</feature>
<feature type="region of interest" description="Disordered" evidence="2">
    <location>
        <begin position="323"/>
        <end position="344"/>
    </location>
</feature>
<feature type="compositionally biased region" description="Basic and acidic residues" evidence="2">
    <location>
        <begin position="323"/>
        <end position="337"/>
    </location>
</feature>
<feature type="binding site" evidence="1">
    <location>
        <begin position="65"/>
        <end position="72"/>
    </location>
    <ligand>
        <name>ATP</name>
        <dbReference type="ChEBI" id="CHEBI:30616"/>
    </ligand>
</feature>
<keyword id="KW-0067">ATP-binding</keyword>
<keyword id="KW-0963">Cytoplasm</keyword>
<keyword id="KW-0227">DNA damage</keyword>
<keyword id="KW-0233">DNA recombination</keyword>
<keyword id="KW-0234">DNA repair</keyword>
<keyword id="KW-0238">DNA-binding</keyword>
<keyword id="KW-0547">Nucleotide-binding</keyword>
<keyword id="KW-0742">SOS response</keyword>